<sequence>MVKIKVRSSAWYDGVDNASHRSYLRAVGFTEEDFAKPLVGVLAAWSELGPCNYHTLDLARYVKEGVKEAGGVGLTAPTIVVNDGINMGTPGMRYSLISRDLIADTIEAQFNAHGVDAWVGIGGCDKTQPGIMMAMVRLDLPAVYLYGGTAEAGWLGERELTIEDTFEAVGSYLAGKITLEELKRIEELSFPTYGTCQGLFTANTMAMLSEALGLALLGSASPPATSARRRAYAVASGRAVLKAAELGVTPRRVVTYDAIYNAAVTLFATAGSTNAILHLLAIAHEAGVKFTLDDFDEISRRVPVIAALRPAGPYAMQDLDRIGGVPRILKKLYKAGFLRPEALTVEGETIGKLLERWQPPAVPEDGILYSVEKPYKPYSGIRILRGNLAPDGAVMKIGAADKLKFEGTAKVYNGEAEAFKAVAAGEIKPGDVVVIRYEGPKGAPGMPEMLKVTAAIVGAGLGEAVALVTDGRFSGATRGIMVGHVAPEAAVGGPIALVENGDKIAIDGETGRITLQIPQEELERRRKNWTPPPPKYSGGLLAKYAALVQQADKGAVTTPPR</sequence>
<keyword id="KW-0001">2Fe-2S</keyword>
<keyword id="KW-0028">Amino-acid biosynthesis</keyword>
<keyword id="KW-0100">Branched-chain amino acid biosynthesis</keyword>
<keyword id="KW-0408">Iron</keyword>
<keyword id="KW-0411">Iron-sulfur</keyword>
<keyword id="KW-0456">Lyase</keyword>
<keyword id="KW-0460">Magnesium</keyword>
<keyword id="KW-0479">Metal-binding</keyword>
<organism>
    <name type="scientific">Pyrobaculum neutrophilum (strain DSM 2338 / JCM 9278 / NBRC 100436 / V24Sta)</name>
    <name type="common">Thermoproteus neutrophilus</name>
    <dbReference type="NCBI Taxonomy" id="444157"/>
    <lineage>
        <taxon>Archaea</taxon>
        <taxon>Thermoproteota</taxon>
        <taxon>Thermoprotei</taxon>
        <taxon>Thermoproteales</taxon>
        <taxon>Thermoproteaceae</taxon>
        <taxon>Pyrobaculum</taxon>
    </lineage>
</organism>
<evidence type="ECO:0000255" key="1">
    <source>
        <dbReference type="HAMAP-Rule" id="MF_00012"/>
    </source>
</evidence>
<feature type="chain" id="PRO_1000089423" description="Dihydroxy-acid dehydratase">
    <location>
        <begin position="1"/>
        <end position="561"/>
    </location>
</feature>
<feature type="active site" description="Proton acceptor" evidence="1">
    <location>
        <position position="474"/>
    </location>
</feature>
<feature type="binding site" evidence="1">
    <location>
        <position position="51"/>
    </location>
    <ligand>
        <name>[2Fe-2S] cluster</name>
        <dbReference type="ChEBI" id="CHEBI:190135"/>
    </ligand>
</feature>
<feature type="binding site" evidence="1">
    <location>
        <position position="83"/>
    </location>
    <ligand>
        <name>Mg(2+)</name>
        <dbReference type="ChEBI" id="CHEBI:18420"/>
    </ligand>
</feature>
<feature type="binding site" evidence="1">
    <location>
        <position position="124"/>
    </location>
    <ligand>
        <name>[2Fe-2S] cluster</name>
        <dbReference type="ChEBI" id="CHEBI:190135"/>
    </ligand>
</feature>
<feature type="binding site" evidence="1">
    <location>
        <position position="125"/>
    </location>
    <ligand>
        <name>Mg(2+)</name>
        <dbReference type="ChEBI" id="CHEBI:18420"/>
    </ligand>
</feature>
<feature type="binding site" description="via carbamate group" evidence="1">
    <location>
        <position position="126"/>
    </location>
    <ligand>
        <name>Mg(2+)</name>
        <dbReference type="ChEBI" id="CHEBI:18420"/>
    </ligand>
</feature>
<feature type="binding site" evidence="1">
    <location>
        <position position="196"/>
    </location>
    <ligand>
        <name>[2Fe-2S] cluster</name>
        <dbReference type="ChEBI" id="CHEBI:190135"/>
    </ligand>
</feature>
<feature type="binding site" evidence="1">
    <location>
        <position position="448"/>
    </location>
    <ligand>
        <name>Mg(2+)</name>
        <dbReference type="ChEBI" id="CHEBI:18420"/>
    </ligand>
</feature>
<feature type="modified residue" description="N6-carboxylysine" evidence="1">
    <location>
        <position position="126"/>
    </location>
</feature>
<protein>
    <recommendedName>
        <fullName evidence="1">Dihydroxy-acid dehydratase</fullName>
        <shortName evidence="1">DAD</shortName>
        <ecNumber evidence="1">4.2.1.9</ecNumber>
    </recommendedName>
</protein>
<name>ILVD_PYRNV</name>
<gene>
    <name evidence="1" type="primary">ilvD</name>
    <name type="ordered locus">Tneu_1925</name>
</gene>
<dbReference type="EC" id="4.2.1.9" evidence="1"/>
<dbReference type="EMBL" id="CP001014">
    <property type="protein sequence ID" value="ACB40840.1"/>
    <property type="molecule type" value="Genomic_DNA"/>
</dbReference>
<dbReference type="RefSeq" id="WP_012351259.1">
    <property type="nucleotide sequence ID" value="NC_010525.1"/>
</dbReference>
<dbReference type="SMR" id="B1YBN8"/>
<dbReference type="STRING" id="444157.Tneu_1925"/>
<dbReference type="GeneID" id="6164868"/>
<dbReference type="KEGG" id="tne:Tneu_1925"/>
<dbReference type="eggNOG" id="arCOG04045">
    <property type="taxonomic scope" value="Archaea"/>
</dbReference>
<dbReference type="HOGENOM" id="CLU_014271_4_2_2"/>
<dbReference type="OrthoDB" id="8674at2157"/>
<dbReference type="UniPathway" id="UPA00047">
    <property type="reaction ID" value="UER00057"/>
</dbReference>
<dbReference type="UniPathway" id="UPA00049">
    <property type="reaction ID" value="UER00061"/>
</dbReference>
<dbReference type="Proteomes" id="UP000001694">
    <property type="component" value="Chromosome"/>
</dbReference>
<dbReference type="GO" id="GO:0051537">
    <property type="term" value="F:2 iron, 2 sulfur cluster binding"/>
    <property type="evidence" value="ECO:0007669"/>
    <property type="project" value="UniProtKB-UniRule"/>
</dbReference>
<dbReference type="GO" id="GO:0004160">
    <property type="term" value="F:dihydroxy-acid dehydratase activity"/>
    <property type="evidence" value="ECO:0007669"/>
    <property type="project" value="UniProtKB-UniRule"/>
</dbReference>
<dbReference type="GO" id="GO:0000287">
    <property type="term" value="F:magnesium ion binding"/>
    <property type="evidence" value="ECO:0007669"/>
    <property type="project" value="UniProtKB-UniRule"/>
</dbReference>
<dbReference type="GO" id="GO:0009097">
    <property type="term" value="P:isoleucine biosynthetic process"/>
    <property type="evidence" value="ECO:0007669"/>
    <property type="project" value="UniProtKB-UniRule"/>
</dbReference>
<dbReference type="GO" id="GO:0009099">
    <property type="term" value="P:L-valine biosynthetic process"/>
    <property type="evidence" value="ECO:0007669"/>
    <property type="project" value="UniProtKB-UniRule"/>
</dbReference>
<dbReference type="FunFam" id="3.50.30.80:FF:000001">
    <property type="entry name" value="Dihydroxy-acid dehydratase"/>
    <property type="match status" value="1"/>
</dbReference>
<dbReference type="Gene3D" id="3.50.30.80">
    <property type="entry name" value="IlvD/EDD C-terminal domain-like"/>
    <property type="match status" value="1"/>
</dbReference>
<dbReference type="HAMAP" id="MF_00012">
    <property type="entry name" value="IlvD"/>
    <property type="match status" value="1"/>
</dbReference>
<dbReference type="InterPro" id="IPR050165">
    <property type="entry name" value="DHAD_IlvD/Edd"/>
</dbReference>
<dbReference type="InterPro" id="IPR042096">
    <property type="entry name" value="Dihydro-acid_dehy_C"/>
</dbReference>
<dbReference type="InterPro" id="IPR004404">
    <property type="entry name" value="DihydroxyA_deHydtase"/>
</dbReference>
<dbReference type="InterPro" id="IPR020558">
    <property type="entry name" value="DiOHA_6PGluconate_deHydtase_CS"/>
</dbReference>
<dbReference type="InterPro" id="IPR056740">
    <property type="entry name" value="ILV_EDD_C"/>
</dbReference>
<dbReference type="InterPro" id="IPR000581">
    <property type="entry name" value="ILV_EDD_N"/>
</dbReference>
<dbReference type="InterPro" id="IPR037237">
    <property type="entry name" value="IlvD/EDD_N"/>
</dbReference>
<dbReference type="NCBIfam" id="TIGR00110">
    <property type="entry name" value="ilvD"/>
    <property type="match status" value="1"/>
</dbReference>
<dbReference type="NCBIfam" id="NF002068">
    <property type="entry name" value="PRK00911.1"/>
    <property type="match status" value="1"/>
</dbReference>
<dbReference type="PANTHER" id="PTHR21000">
    <property type="entry name" value="DIHYDROXY-ACID DEHYDRATASE DAD"/>
    <property type="match status" value="1"/>
</dbReference>
<dbReference type="PANTHER" id="PTHR21000:SF5">
    <property type="entry name" value="DIHYDROXY-ACID DEHYDRATASE, MITOCHONDRIAL"/>
    <property type="match status" value="1"/>
</dbReference>
<dbReference type="Pfam" id="PF24877">
    <property type="entry name" value="ILV_EDD_C"/>
    <property type="match status" value="1"/>
</dbReference>
<dbReference type="Pfam" id="PF00920">
    <property type="entry name" value="ILVD_EDD_N"/>
    <property type="match status" value="1"/>
</dbReference>
<dbReference type="SUPFAM" id="SSF143975">
    <property type="entry name" value="IlvD/EDD N-terminal domain-like"/>
    <property type="match status" value="1"/>
</dbReference>
<dbReference type="SUPFAM" id="SSF52016">
    <property type="entry name" value="LeuD/IlvD-like"/>
    <property type="match status" value="1"/>
</dbReference>
<dbReference type="PROSITE" id="PS00886">
    <property type="entry name" value="ILVD_EDD_1"/>
    <property type="match status" value="1"/>
</dbReference>
<dbReference type="PROSITE" id="PS00887">
    <property type="entry name" value="ILVD_EDD_2"/>
    <property type="match status" value="1"/>
</dbReference>
<reference key="1">
    <citation type="submission" date="2008-03" db="EMBL/GenBank/DDBJ databases">
        <title>Complete sequence of Thermoproteus neutrophilus V24Sta.</title>
        <authorList>
            <consortium name="US DOE Joint Genome Institute"/>
            <person name="Copeland A."/>
            <person name="Lucas S."/>
            <person name="Lapidus A."/>
            <person name="Glavina del Rio T."/>
            <person name="Dalin E."/>
            <person name="Tice H."/>
            <person name="Bruce D."/>
            <person name="Goodwin L."/>
            <person name="Pitluck S."/>
            <person name="Sims D."/>
            <person name="Brettin T."/>
            <person name="Detter J.C."/>
            <person name="Han C."/>
            <person name="Kuske C.R."/>
            <person name="Schmutz J."/>
            <person name="Larimer F."/>
            <person name="Land M."/>
            <person name="Hauser L."/>
            <person name="Kyrpides N."/>
            <person name="Mikhailova N."/>
            <person name="Biddle J.F."/>
            <person name="Zhang Z."/>
            <person name="Fitz-Gibbon S.T."/>
            <person name="Lowe T.M."/>
            <person name="Saltikov C."/>
            <person name="House C.H."/>
            <person name="Richardson P."/>
        </authorList>
    </citation>
    <scope>NUCLEOTIDE SEQUENCE [LARGE SCALE GENOMIC DNA]</scope>
    <source>
        <strain>DSM 2338 / JCM 9278 / NBRC 100436 / V24Sta</strain>
    </source>
</reference>
<proteinExistence type="inferred from homology"/>
<comment type="function">
    <text evidence="1">Functions in the biosynthesis of branched-chain amino acids. Catalyzes the dehydration of (2R,3R)-2,3-dihydroxy-3-methylpentanoate (2,3-dihydroxy-3-methylvalerate) into 2-oxo-3-methylpentanoate (2-oxo-3-methylvalerate) and of (2R)-2,3-dihydroxy-3-methylbutanoate (2,3-dihydroxyisovalerate) into 2-oxo-3-methylbutanoate (2-oxoisovalerate), the penultimate precursor to L-isoleucine and L-valine, respectively.</text>
</comment>
<comment type="catalytic activity">
    <reaction evidence="1">
        <text>(2R)-2,3-dihydroxy-3-methylbutanoate = 3-methyl-2-oxobutanoate + H2O</text>
        <dbReference type="Rhea" id="RHEA:24809"/>
        <dbReference type="ChEBI" id="CHEBI:11851"/>
        <dbReference type="ChEBI" id="CHEBI:15377"/>
        <dbReference type="ChEBI" id="CHEBI:49072"/>
        <dbReference type="EC" id="4.2.1.9"/>
    </reaction>
    <physiologicalReaction direction="left-to-right" evidence="1">
        <dbReference type="Rhea" id="RHEA:24810"/>
    </physiologicalReaction>
</comment>
<comment type="catalytic activity">
    <reaction evidence="1">
        <text>(2R,3R)-2,3-dihydroxy-3-methylpentanoate = (S)-3-methyl-2-oxopentanoate + H2O</text>
        <dbReference type="Rhea" id="RHEA:27694"/>
        <dbReference type="ChEBI" id="CHEBI:15377"/>
        <dbReference type="ChEBI" id="CHEBI:35146"/>
        <dbReference type="ChEBI" id="CHEBI:49258"/>
        <dbReference type="EC" id="4.2.1.9"/>
    </reaction>
    <physiologicalReaction direction="left-to-right" evidence="1">
        <dbReference type="Rhea" id="RHEA:27695"/>
    </physiologicalReaction>
</comment>
<comment type="cofactor">
    <cofactor evidence="1">
        <name>[2Fe-2S] cluster</name>
        <dbReference type="ChEBI" id="CHEBI:190135"/>
    </cofactor>
    <text evidence="1">Binds 1 [2Fe-2S] cluster per subunit. This cluster acts as a Lewis acid cofactor.</text>
</comment>
<comment type="cofactor">
    <cofactor evidence="1">
        <name>Mg(2+)</name>
        <dbReference type="ChEBI" id="CHEBI:18420"/>
    </cofactor>
</comment>
<comment type="pathway">
    <text evidence="1">Amino-acid biosynthesis; L-isoleucine biosynthesis; L-isoleucine from 2-oxobutanoate: step 3/4.</text>
</comment>
<comment type="pathway">
    <text evidence="1">Amino-acid biosynthesis; L-valine biosynthesis; L-valine from pyruvate: step 3/4.</text>
</comment>
<comment type="subunit">
    <text evidence="1">Homodimer.</text>
</comment>
<comment type="similarity">
    <text evidence="1">Belongs to the IlvD/Edd family.</text>
</comment>
<accession>B1YBN8</accession>